<organism>
    <name type="scientific">Bos taurus</name>
    <name type="common">Bovine</name>
    <dbReference type="NCBI Taxonomy" id="9913"/>
    <lineage>
        <taxon>Eukaryota</taxon>
        <taxon>Metazoa</taxon>
        <taxon>Chordata</taxon>
        <taxon>Craniata</taxon>
        <taxon>Vertebrata</taxon>
        <taxon>Euteleostomi</taxon>
        <taxon>Mammalia</taxon>
        <taxon>Eutheria</taxon>
        <taxon>Laurasiatheria</taxon>
        <taxon>Artiodactyla</taxon>
        <taxon>Ruminantia</taxon>
        <taxon>Pecora</taxon>
        <taxon>Bovidae</taxon>
        <taxon>Bovinae</taxon>
        <taxon>Bos</taxon>
    </lineage>
</organism>
<keyword id="KW-0175">Coiled coil</keyword>
<keyword id="KW-0403">Intermediate filament</keyword>
<keyword id="KW-0416">Keratin</keyword>
<keyword id="KW-1185">Reference proteome</keyword>
<evidence type="ECO:0000255" key="1">
    <source>
        <dbReference type="PROSITE-ProRule" id="PRU01188"/>
    </source>
</evidence>
<evidence type="ECO:0000256" key="2">
    <source>
        <dbReference type="SAM" id="MobiDB-lite"/>
    </source>
</evidence>
<comment type="subunit">
    <text>Heterotetramer of two type I and two type II keratins.</text>
</comment>
<comment type="miscellaneous">
    <text>There are two types of cytoskeletal and microfibrillar keratin: I (acidic; 40-55 kDa) and II (neutral to basic; 56-70 kDa).</text>
</comment>
<comment type="similarity">
    <text evidence="1">Belongs to the intermediate filament family.</text>
</comment>
<dbReference type="EMBL" id="K03534">
    <property type="protein sequence ID" value="AAA30601.1"/>
    <property type="molecule type" value="mRNA"/>
</dbReference>
<dbReference type="PIR" id="A02948">
    <property type="entry name" value="KRBO2B"/>
</dbReference>
<dbReference type="SMR" id="P04262"/>
<dbReference type="STRING" id="9913.ENSBTAP00000054865"/>
<dbReference type="PeptideAtlas" id="P04262"/>
<dbReference type="eggNOG" id="ENOG502QURK">
    <property type="taxonomic scope" value="Eukaryota"/>
</dbReference>
<dbReference type="InParanoid" id="P04262"/>
<dbReference type="Proteomes" id="UP000009136">
    <property type="component" value="Unplaced"/>
</dbReference>
<dbReference type="GO" id="GO:0005882">
    <property type="term" value="C:intermediate filament"/>
    <property type="evidence" value="ECO:0007669"/>
    <property type="project" value="UniProtKB-KW"/>
</dbReference>
<dbReference type="Gene3D" id="1.20.5.170">
    <property type="match status" value="1"/>
</dbReference>
<dbReference type="InterPro" id="IPR018039">
    <property type="entry name" value="IF_conserved"/>
</dbReference>
<dbReference type="InterPro" id="IPR039008">
    <property type="entry name" value="IF_rod_dom"/>
</dbReference>
<dbReference type="PANTHER" id="PTHR45616">
    <property type="entry name" value="GATA-TYPE DOMAIN-CONTAINING PROTEIN"/>
    <property type="match status" value="1"/>
</dbReference>
<dbReference type="PANTHER" id="PTHR45616:SF38">
    <property type="entry name" value="KERATIN, TYPE II CYTOSKELETAL 3"/>
    <property type="match status" value="1"/>
</dbReference>
<dbReference type="Pfam" id="PF00038">
    <property type="entry name" value="Filament"/>
    <property type="match status" value="1"/>
</dbReference>
<dbReference type="SUPFAM" id="SSF64593">
    <property type="entry name" value="Intermediate filament protein, coiled coil region"/>
    <property type="match status" value="1"/>
</dbReference>
<dbReference type="PROSITE" id="PS00226">
    <property type="entry name" value="IF_ROD_1"/>
    <property type="match status" value="1"/>
</dbReference>
<dbReference type="PROSITE" id="PS51842">
    <property type="entry name" value="IF_ROD_2"/>
    <property type="match status" value="1"/>
</dbReference>
<protein>
    <recommendedName>
        <fullName>Keratin, type II cytoskeletal 68 kDa, component IB</fullName>
    </recommendedName>
</protein>
<feature type="chain" id="PRO_0000063745" description="Keratin, type II cytoskeletal 68 kDa, component IB">
    <location>
        <begin position="1" status="less than"/>
        <end position="166"/>
    </location>
</feature>
<feature type="domain" description="IF rod" evidence="1">
    <location>
        <begin position="1" status="less than"/>
        <end position="41"/>
    </location>
</feature>
<feature type="region of interest" description="Coil 2B">
    <location>
        <begin position="1" status="less than"/>
        <end position="41"/>
    </location>
</feature>
<feature type="region of interest" description="Tail">
    <location>
        <begin position="42"/>
        <end position="166"/>
    </location>
</feature>
<feature type="region of interest" description="Disordered" evidence="2">
    <location>
        <begin position="122"/>
        <end position="166"/>
    </location>
</feature>
<feature type="compositionally biased region" description="Gly residues" evidence="2">
    <location>
        <begin position="122"/>
        <end position="146"/>
    </location>
</feature>
<feature type="compositionally biased region" description="Low complexity" evidence="2">
    <location>
        <begin position="147"/>
        <end position="166"/>
    </location>
</feature>
<feature type="non-terminal residue">
    <location>
        <position position="1"/>
    </location>
</feature>
<sequence>EAKDDLARLLRDYQDAMNVKLALDVEIATYRKLLEGEECRMSGECPSAVSISVVSSSSTTSASAGGFGGGYGGGVGVGGGARSGFGGGSGFGGGSGISGSSGFGGGSGSGFGGGSGFSGSSGFGGGSSGFGSGSGGRSGVSGGGLSSGSSRGGSVRFSQSSQRTSR</sequence>
<accession>P04262</accession>
<proteinExistence type="evidence at transcript level"/>
<reference key="1">
    <citation type="journal article" date="1984" name="Differentiation">
        <title>Amino acid sequence diversity between bovine epidermal cytokeratin polypeptides of the basic (type II) subfamily as determined from cDNA clones.</title>
        <authorList>
            <person name="Jorcano J.L."/>
            <person name="Franz J.K."/>
            <person name="Franke W.W."/>
        </authorList>
    </citation>
    <scope>NUCLEOTIDE SEQUENCE [MRNA]</scope>
</reference>
<name>K2CB_BOVIN</name>